<evidence type="ECO:0000255" key="1">
    <source>
        <dbReference type="HAMAP-Rule" id="MF_01151"/>
    </source>
</evidence>
<reference key="1">
    <citation type="journal article" date="2005" name="Proc. Natl. Acad. Sci. U.S.A.">
        <title>The psychrophilic lifestyle as revealed by the genome sequence of Colwellia psychrerythraea 34H through genomic and proteomic analyses.</title>
        <authorList>
            <person name="Methe B.A."/>
            <person name="Nelson K.E."/>
            <person name="Deming J.W."/>
            <person name="Momen B."/>
            <person name="Melamud E."/>
            <person name="Zhang X."/>
            <person name="Moult J."/>
            <person name="Madupu R."/>
            <person name="Nelson W.C."/>
            <person name="Dodson R.J."/>
            <person name="Brinkac L.M."/>
            <person name="Daugherty S.C."/>
            <person name="Durkin A.S."/>
            <person name="DeBoy R.T."/>
            <person name="Kolonay J.F."/>
            <person name="Sullivan S.A."/>
            <person name="Zhou L."/>
            <person name="Davidsen T.M."/>
            <person name="Wu M."/>
            <person name="Huston A.L."/>
            <person name="Lewis M."/>
            <person name="Weaver B."/>
            <person name="Weidman J.F."/>
            <person name="Khouri H."/>
            <person name="Utterback T.R."/>
            <person name="Feldblyum T.V."/>
            <person name="Fraser C.M."/>
        </authorList>
    </citation>
    <scope>NUCLEOTIDE SEQUENCE [LARGE SCALE GENOMIC DNA]</scope>
    <source>
        <strain>34H / ATCC BAA-681</strain>
    </source>
</reference>
<feature type="chain" id="PRO_1000085110" description="Protein GrpE">
    <location>
        <begin position="1"/>
        <end position="209"/>
    </location>
</feature>
<protein>
    <recommendedName>
        <fullName evidence="1">Protein GrpE</fullName>
    </recommendedName>
    <alternativeName>
        <fullName evidence="1">HSP-70 cofactor</fullName>
    </alternativeName>
</protein>
<accession>Q47XI4</accession>
<gene>
    <name evidence="1" type="primary">grpE</name>
    <name type="ordered locus">CPS_3823</name>
</gene>
<name>GRPE_COLP3</name>
<proteinExistence type="inferred from homology"/>
<keyword id="KW-0143">Chaperone</keyword>
<keyword id="KW-0963">Cytoplasm</keyword>
<keyword id="KW-0346">Stress response</keyword>
<dbReference type="EMBL" id="CP000083">
    <property type="protein sequence ID" value="AAZ26848.1"/>
    <property type="molecule type" value="Genomic_DNA"/>
</dbReference>
<dbReference type="RefSeq" id="WP_011044572.1">
    <property type="nucleotide sequence ID" value="NC_003910.7"/>
</dbReference>
<dbReference type="SMR" id="Q47XI4"/>
<dbReference type="STRING" id="167879.CPS_3823"/>
<dbReference type="KEGG" id="cps:CPS_3823"/>
<dbReference type="eggNOG" id="COG0576">
    <property type="taxonomic scope" value="Bacteria"/>
</dbReference>
<dbReference type="HOGENOM" id="CLU_057217_6_0_6"/>
<dbReference type="Proteomes" id="UP000000547">
    <property type="component" value="Chromosome"/>
</dbReference>
<dbReference type="GO" id="GO:0005829">
    <property type="term" value="C:cytosol"/>
    <property type="evidence" value="ECO:0007669"/>
    <property type="project" value="TreeGrafter"/>
</dbReference>
<dbReference type="GO" id="GO:0000774">
    <property type="term" value="F:adenyl-nucleotide exchange factor activity"/>
    <property type="evidence" value="ECO:0007669"/>
    <property type="project" value="InterPro"/>
</dbReference>
<dbReference type="GO" id="GO:0042803">
    <property type="term" value="F:protein homodimerization activity"/>
    <property type="evidence" value="ECO:0007669"/>
    <property type="project" value="InterPro"/>
</dbReference>
<dbReference type="GO" id="GO:0051087">
    <property type="term" value="F:protein-folding chaperone binding"/>
    <property type="evidence" value="ECO:0007669"/>
    <property type="project" value="InterPro"/>
</dbReference>
<dbReference type="GO" id="GO:0051082">
    <property type="term" value="F:unfolded protein binding"/>
    <property type="evidence" value="ECO:0007669"/>
    <property type="project" value="TreeGrafter"/>
</dbReference>
<dbReference type="GO" id="GO:0006457">
    <property type="term" value="P:protein folding"/>
    <property type="evidence" value="ECO:0007669"/>
    <property type="project" value="InterPro"/>
</dbReference>
<dbReference type="CDD" id="cd00446">
    <property type="entry name" value="GrpE"/>
    <property type="match status" value="1"/>
</dbReference>
<dbReference type="FunFam" id="2.30.22.10:FF:000001">
    <property type="entry name" value="Protein GrpE"/>
    <property type="match status" value="1"/>
</dbReference>
<dbReference type="Gene3D" id="3.90.20.20">
    <property type="match status" value="1"/>
</dbReference>
<dbReference type="Gene3D" id="2.30.22.10">
    <property type="entry name" value="Head domain of nucleotide exchange factor GrpE"/>
    <property type="match status" value="1"/>
</dbReference>
<dbReference type="HAMAP" id="MF_01151">
    <property type="entry name" value="GrpE"/>
    <property type="match status" value="1"/>
</dbReference>
<dbReference type="InterPro" id="IPR000740">
    <property type="entry name" value="GrpE"/>
</dbReference>
<dbReference type="InterPro" id="IPR013805">
    <property type="entry name" value="GrpE_coiled_coil"/>
</dbReference>
<dbReference type="InterPro" id="IPR009012">
    <property type="entry name" value="GrpE_head"/>
</dbReference>
<dbReference type="NCBIfam" id="NF010737">
    <property type="entry name" value="PRK14139.1"/>
    <property type="match status" value="1"/>
</dbReference>
<dbReference type="NCBIfam" id="NF010738">
    <property type="entry name" value="PRK14140.1"/>
    <property type="match status" value="1"/>
</dbReference>
<dbReference type="NCBIfam" id="NF010748">
    <property type="entry name" value="PRK14150.1"/>
    <property type="match status" value="1"/>
</dbReference>
<dbReference type="PANTHER" id="PTHR21237">
    <property type="entry name" value="GRPE PROTEIN"/>
    <property type="match status" value="1"/>
</dbReference>
<dbReference type="PANTHER" id="PTHR21237:SF23">
    <property type="entry name" value="GRPE PROTEIN HOMOLOG, MITOCHONDRIAL"/>
    <property type="match status" value="1"/>
</dbReference>
<dbReference type="Pfam" id="PF01025">
    <property type="entry name" value="GrpE"/>
    <property type="match status" value="1"/>
</dbReference>
<dbReference type="PRINTS" id="PR00773">
    <property type="entry name" value="GRPEPROTEIN"/>
</dbReference>
<dbReference type="SUPFAM" id="SSF58014">
    <property type="entry name" value="Coiled-coil domain of nucleotide exchange factor GrpE"/>
    <property type="match status" value="1"/>
</dbReference>
<dbReference type="SUPFAM" id="SSF51064">
    <property type="entry name" value="Head domain of nucleotide exchange factor GrpE"/>
    <property type="match status" value="1"/>
</dbReference>
<dbReference type="PROSITE" id="PS01071">
    <property type="entry name" value="GRPE"/>
    <property type="match status" value="1"/>
</dbReference>
<organism>
    <name type="scientific">Colwellia psychrerythraea (strain 34H / ATCC BAA-681)</name>
    <name type="common">Vibrio psychroerythus</name>
    <dbReference type="NCBI Taxonomy" id="167879"/>
    <lineage>
        <taxon>Bacteria</taxon>
        <taxon>Pseudomonadati</taxon>
        <taxon>Pseudomonadota</taxon>
        <taxon>Gammaproteobacteria</taxon>
        <taxon>Alteromonadales</taxon>
        <taxon>Colwelliaceae</taxon>
        <taxon>Colwellia</taxon>
    </lineage>
</organism>
<sequence length="209" mass="22935">MTTESTSNKEELSAEQLADDIVQQAEEQVEDQHDHAHEVISAEQEKINELELALATAQSTVADQKDSVIRAKAEVDNIRRRAAQDVEKARKFALEKFAGEMLTSVDNLERALQNIDKEDESNKGVIEGVELTLQGLITSLDKFGVKAVDPQDQPFNPELHQAMSMQEVPGVAPNTVIAVMQKGYELNGRLIRPAMVMVSKAAPTVDATA</sequence>
<comment type="function">
    <text evidence="1">Participates actively in the response to hyperosmotic and heat shock by preventing the aggregation of stress-denatured proteins, in association with DnaK and GrpE. It is the nucleotide exchange factor for DnaK and may function as a thermosensor. Unfolded proteins bind initially to DnaJ; upon interaction with the DnaJ-bound protein, DnaK hydrolyzes its bound ATP, resulting in the formation of a stable complex. GrpE releases ADP from DnaK; ATP binding to DnaK triggers the release of the substrate protein, thus completing the reaction cycle. Several rounds of ATP-dependent interactions between DnaJ, DnaK and GrpE are required for fully efficient folding.</text>
</comment>
<comment type="subunit">
    <text evidence="1">Homodimer.</text>
</comment>
<comment type="subcellular location">
    <subcellularLocation>
        <location evidence="1">Cytoplasm</location>
    </subcellularLocation>
</comment>
<comment type="similarity">
    <text evidence="1">Belongs to the GrpE family.</text>
</comment>